<dbReference type="EMBL" id="U19729">
    <property type="protein sequence ID" value="AAB82352.1"/>
    <property type="molecule type" value="Genomic_DNA"/>
</dbReference>
<dbReference type="EMBL" id="J05463">
    <property type="protein sequence ID" value="AAB05631.1"/>
    <property type="molecule type" value="Genomic_DNA"/>
</dbReference>
<dbReference type="EMBL" id="BK006945">
    <property type="protein sequence ID" value="DAA09693.1"/>
    <property type="molecule type" value="Genomic_DNA"/>
</dbReference>
<dbReference type="PIR" id="S55948">
    <property type="entry name" value="S55948"/>
</dbReference>
<dbReference type="RefSeq" id="NP_013496.3">
    <property type="nucleotide sequence ID" value="NM_001182280.3"/>
</dbReference>
<dbReference type="BioGRID" id="31651">
    <property type="interactions" value="44"/>
</dbReference>
<dbReference type="DIP" id="DIP-1946N"/>
<dbReference type="FunCoup" id="P18634">
    <property type="interactions" value="66"/>
</dbReference>
<dbReference type="IntAct" id="P18634">
    <property type="interactions" value="3"/>
</dbReference>
<dbReference type="MINT" id="P18634"/>
<dbReference type="STRING" id="4932.YLR392C"/>
<dbReference type="iPTMnet" id="P18634"/>
<dbReference type="PaxDb" id="4932-YLR392C"/>
<dbReference type="PeptideAtlas" id="P18634"/>
<dbReference type="EnsemblFungi" id="YLR392C_mRNA">
    <property type="protein sequence ID" value="YLR392C"/>
    <property type="gene ID" value="YLR392C"/>
</dbReference>
<dbReference type="GeneID" id="851108"/>
<dbReference type="KEGG" id="sce:YLR392C"/>
<dbReference type="AGR" id="SGD:S000004384"/>
<dbReference type="SGD" id="S000004384">
    <property type="gene designation" value="ART10"/>
</dbReference>
<dbReference type="VEuPathDB" id="FungiDB:YLR392C"/>
<dbReference type="eggNOG" id="ENOG502QWIY">
    <property type="taxonomic scope" value="Eukaryota"/>
</dbReference>
<dbReference type="HOGENOM" id="CLU_540776_0_0_1"/>
<dbReference type="InParanoid" id="P18634"/>
<dbReference type="OMA" id="YSFKTCT"/>
<dbReference type="OrthoDB" id="3365616at2759"/>
<dbReference type="BioCyc" id="YEAST:G3O-32457-MONOMER"/>
<dbReference type="BioGRID-ORCS" id="851108">
    <property type="hits" value="0 hits in 10 CRISPR screens"/>
</dbReference>
<dbReference type="PRO" id="PR:P18634"/>
<dbReference type="Proteomes" id="UP000002311">
    <property type="component" value="Chromosome XII"/>
</dbReference>
<dbReference type="RNAct" id="P18634">
    <property type="molecule type" value="protein"/>
</dbReference>
<dbReference type="GO" id="GO:0005737">
    <property type="term" value="C:cytoplasm"/>
    <property type="evidence" value="ECO:0007005"/>
    <property type="project" value="SGD"/>
</dbReference>
<dbReference type="GO" id="GO:0005829">
    <property type="term" value="C:cytosol"/>
    <property type="evidence" value="ECO:0000318"/>
    <property type="project" value="GO_Central"/>
</dbReference>
<dbReference type="GO" id="GO:0030674">
    <property type="term" value="F:protein-macromolecule adaptor activity"/>
    <property type="evidence" value="ECO:0000318"/>
    <property type="project" value="GO_Central"/>
</dbReference>
<dbReference type="GO" id="GO:0031625">
    <property type="term" value="F:ubiquitin protein ligase binding"/>
    <property type="evidence" value="ECO:0000318"/>
    <property type="project" value="GO_Central"/>
</dbReference>
<dbReference type="GO" id="GO:0070086">
    <property type="term" value="P:ubiquitin-dependent endocytosis"/>
    <property type="evidence" value="ECO:0000318"/>
    <property type="project" value="GO_Central"/>
</dbReference>
<dbReference type="CDD" id="cd22952">
    <property type="entry name" value="ART10-like"/>
    <property type="match status" value="1"/>
</dbReference>
<dbReference type="FunFam" id="2.60.40.640:FF:000038">
    <property type="entry name" value="Arrestin-related trafficking adapter 10"/>
    <property type="match status" value="1"/>
</dbReference>
<dbReference type="Gene3D" id="2.60.40.640">
    <property type="match status" value="1"/>
</dbReference>
<dbReference type="InterPro" id="IPR014752">
    <property type="entry name" value="Arrestin-like_C"/>
</dbReference>
<comment type="function">
    <text evidence="1">May regulate endocytosis by recruiting RSP5 ubiquitin ligase activity to specific plasma membrane proteins in response to extracellular stimuli.</text>
</comment>
<comment type="subunit">
    <text evidence="4">Interacts with RSP5.</text>
</comment>
<comment type="interaction">
    <interactant intactId="EBI-27197">
        <id>P18634</id>
    </interactant>
    <interactant intactId="EBI-16219">
        <id>P39940</id>
        <label>RSP5</label>
    </interactant>
    <organismsDiffer>false</organismsDiffer>
    <experiments>5</experiments>
</comment>
<comment type="subcellular location">
    <subcellularLocation>
        <location evidence="2">Cytoplasm</location>
    </subcellularLocation>
</comment>
<comment type="PTM">
    <text evidence="4">Ubiquitinated by RSP5.</text>
</comment>
<comment type="miscellaneous">
    <text evidence="3">Present with 736 molecules/cell in log phase SD medium.</text>
</comment>
<comment type="similarity">
    <text evidence="5">Belongs to the ART10 family.</text>
</comment>
<protein>
    <recommendedName>
        <fullName>Arrestin-related trafficking adapter 10</fullName>
    </recommendedName>
</protein>
<evidence type="ECO:0000250" key="1"/>
<evidence type="ECO:0000269" key="2">
    <source>
    </source>
</evidence>
<evidence type="ECO:0000269" key="3">
    <source>
    </source>
</evidence>
<evidence type="ECO:0000269" key="4">
    <source>
    </source>
</evidence>
<evidence type="ECO:0000305" key="5"/>
<evidence type="ECO:0007744" key="6">
    <source>
    </source>
</evidence>
<name>ART10_YEAST</name>
<organism>
    <name type="scientific">Saccharomyces cerevisiae (strain ATCC 204508 / S288c)</name>
    <name type="common">Baker's yeast</name>
    <dbReference type="NCBI Taxonomy" id="559292"/>
    <lineage>
        <taxon>Eukaryota</taxon>
        <taxon>Fungi</taxon>
        <taxon>Dikarya</taxon>
        <taxon>Ascomycota</taxon>
        <taxon>Saccharomycotina</taxon>
        <taxon>Saccharomycetes</taxon>
        <taxon>Saccharomycetales</taxon>
        <taxon>Saccharomycetaceae</taxon>
        <taxon>Saccharomyces</taxon>
    </lineage>
</organism>
<feature type="chain" id="PRO_0000203235" description="Arrestin-related trafficking adapter 10">
    <location>
        <begin position="1"/>
        <end position="518"/>
    </location>
</feature>
<feature type="cross-link" description="Glycyl lysine isopeptide (Lys-Gly) (interchain with G-Cter in ubiquitin)" evidence="6">
    <location>
        <position position="118"/>
    </location>
</feature>
<gene>
    <name type="primary">ART10</name>
    <name type="ordered locus">YLR392C</name>
    <name type="ORF">L8084.13</name>
</gene>
<proteinExistence type="evidence at protein level"/>
<sequence>MAPKISISLNPPYNGEFYSSNDQMSGIVSLQLTKALSIRKISVILKGFSETLTKIDQEYMFQQNGMMMPGQDNKSFHTLMKFEQRVFPPDNVWNALDGSSKPFKVKPGSYNYSFQFDKFPRKPECLKNHTAKTVAFVTRSNARLPPTFNSHWQEFNKIDNLDLYFYSFGKVIYMVQVQLELGKSSSWFKPFHKLIREIETFEFIPEPKDLIIEPDEDDNEELNAFSNNSRGNSMVTNNEFFNSSNLKVPSKDVKVVNGVGYIKSDRNFSQANSILIENGDIRSRPVSSVTSTRQSTRLVNGMKVFPSTYKMGLPDGESNMRIEVRSRDLKQIYRKDYLFRSGSQNFDKVYVVMEGNIASLSKMQITPLKLQLNLLETTTYLSQGIANGNYSSLKLIEIDLNQLKSNKPLLDLNEIRENFDGSMFECELRLKDHPILRKLVFNEEDYRHRGNRLYSFKTCTIKRTFSLQLLIEWGINGIRKQSEVNIDPVQIFCQVREHVEAEALPRYVPPPTYTEMAS</sequence>
<accession>P18634</accession>
<accession>D6VZ27</accession>
<reference key="1">
    <citation type="journal article" date="1997" name="Nature">
        <title>The nucleotide sequence of Saccharomyces cerevisiae chromosome XII.</title>
        <authorList>
            <person name="Johnston M."/>
            <person name="Hillier L.W."/>
            <person name="Riles L."/>
            <person name="Albermann K."/>
            <person name="Andre B."/>
            <person name="Ansorge W."/>
            <person name="Benes V."/>
            <person name="Brueckner M."/>
            <person name="Delius H."/>
            <person name="Dubois E."/>
            <person name="Duesterhoeft A."/>
            <person name="Entian K.-D."/>
            <person name="Floeth M."/>
            <person name="Goffeau A."/>
            <person name="Hebling U."/>
            <person name="Heumann K."/>
            <person name="Heuss-Neitzel D."/>
            <person name="Hilbert H."/>
            <person name="Hilger F."/>
            <person name="Kleine K."/>
            <person name="Koetter P."/>
            <person name="Louis E.J."/>
            <person name="Messenguy F."/>
            <person name="Mewes H.-W."/>
            <person name="Miosga T."/>
            <person name="Moestl D."/>
            <person name="Mueller-Auer S."/>
            <person name="Nentwich U."/>
            <person name="Obermaier B."/>
            <person name="Piravandi E."/>
            <person name="Pohl T.M."/>
            <person name="Portetelle D."/>
            <person name="Purnelle B."/>
            <person name="Rechmann S."/>
            <person name="Rieger M."/>
            <person name="Rinke M."/>
            <person name="Rose M."/>
            <person name="Scharfe M."/>
            <person name="Scherens B."/>
            <person name="Scholler P."/>
            <person name="Schwager C."/>
            <person name="Schwarz S."/>
            <person name="Underwood A.P."/>
            <person name="Urrestarazu L.A."/>
            <person name="Vandenbol M."/>
            <person name="Verhasselt P."/>
            <person name="Vierendeels F."/>
            <person name="Voet M."/>
            <person name="Volckaert G."/>
            <person name="Voss H."/>
            <person name="Wambutt R."/>
            <person name="Wedler E."/>
            <person name="Wedler H."/>
            <person name="Zimmermann F.K."/>
            <person name="Zollner A."/>
            <person name="Hani J."/>
            <person name="Hoheisel J.D."/>
        </authorList>
    </citation>
    <scope>NUCLEOTIDE SEQUENCE [LARGE SCALE GENOMIC DNA]</scope>
    <source>
        <strain>ATCC 204508 / S288c</strain>
    </source>
</reference>
<reference key="2">
    <citation type="journal article" date="2014" name="G3 (Bethesda)">
        <title>The reference genome sequence of Saccharomyces cerevisiae: Then and now.</title>
        <authorList>
            <person name="Engel S.R."/>
            <person name="Dietrich F.S."/>
            <person name="Fisk D.G."/>
            <person name="Binkley G."/>
            <person name="Balakrishnan R."/>
            <person name="Costanzo M.C."/>
            <person name="Dwight S.S."/>
            <person name="Hitz B.C."/>
            <person name="Karra K."/>
            <person name="Nash R.S."/>
            <person name="Weng S."/>
            <person name="Wong E.D."/>
            <person name="Lloyd P."/>
            <person name="Skrzypek M.S."/>
            <person name="Miyasato S.R."/>
            <person name="Simison M."/>
            <person name="Cherry J.M."/>
        </authorList>
    </citation>
    <scope>GENOME REANNOTATION</scope>
    <source>
        <strain>ATCC 204508 / S288c</strain>
    </source>
</reference>
<reference key="3">
    <citation type="journal article" date="1990" name="J. Biol. Chem.">
        <title>ATP 10, a yeast nuclear gene required for the assembly of the mitochondrial F1-F0 complex.</title>
        <authorList>
            <person name="Ackerman S.H."/>
            <person name="Tzagoloff A."/>
        </authorList>
    </citation>
    <scope>NUCLEOTIDE SEQUENCE [GENOMIC DNA] OF 1-210</scope>
</reference>
<reference key="4">
    <citation type="journal article" date="2003" name="Nature">
        <title>Global analysis of protein localization in budding yeast.</title>
        <authorList>
            <person name="Huh W.-K."/>
            <person name="Falvo J.V."/>
            <person name="Gerke L.C."/>
            <person name="Carroll A.S."/>
            <person name="Howson R.W."/>
            <person name="Weissman J.S."/>
            <person name="O'Shea E.K."/>
        </authorList>
    </citation>
    <scope>SUBCELLULAR LOCATION [LARGE SCALE ANALYSIS]</scope>
</reference>
<reference key="5">
    <citation type="journal article" date="2003" name="Nature">
        <title>Global analysis of protein expression in yeast.</title>
        <authorList>
            <person name="Ghaemmaghami S."/>
            <person name="Huh W.-K."/>
            <person name="Bower K."/>
            <person name="Howson R.W."/>
            <person name="Belle A."/>
            <person name="Dephoure N."/>
            <person name="O'Shea E.K."/>
            <person name="Weissman J.S."/>
        </authorList>
    </citation>
    <scope>LEVEL OF PROTEIN EXPRESSION [LARGE SCALE ANALYSIS]</scope>
</reference>
<reference key="6">
    <citation type="journal article" date="2007" name="Mol. Syst. Biol.">
        <title>Ubiquitination screen using protein microarrays for comprehensive identification of Rsp5 substrates in yeast.</title>
        <authorList>
            <person name="Gupta R."/>
            <person name="Kus B."/>
            <person name="Fladd C."/>
            <person name="Wasmuth J."/>
            <person name="Tonikian R."/>
            <person name="Sidhu S."/>
            <person name="Krogan N.J."/>
            <person name="Parkinson J."/>
            <person name="Rotin D."/>
        </authorList>
    </citation>
    <scope>INTERACTION WITH RSP5</scope>
    <scope>UBIQUITINATION BY RSP5</scope>
</reference>
<reference key="7">
    <citation type="journal article" date="2008" name="Cell">
        <title>Arrestin-related ubiquitin-ligase adaptors regulate endocytosis and protein turnover at the cell surface.</title>
        <authorList>
            <person name="Lin C.H."/>
            <person name="MacGurn J.A."/>
            <person name="Chu T."/>
            <person name="Stefan C.J."/>
            <person name="Emr S.D."/>
        </authorList>
    </citation>
    <scope>GENE NAME</scope>
</reference>
<reference key="8">
    <citation type="journal article" date="2012" name="Proteomics">
        <title>Sites of ubiquitin attachment in Saccharomyces cerevisiae.</title>
        <authorList>
            <person name="Starita L.M."/>
            <person name="Lo R.S."/>
            <person name="Eng J.K."/>
            <person name="von Haller P.D."/>
            <person name="Fields S."/>
        </authorList>
    </citation>
    <scope>UBIQUITINATION [LARGE SCALE ANALYSIS] AT LYS-118</scope>
    <scope>IDENTIFICATION BY MASS SPECTROMETRY [LARGE SCALE ANALYSIS]</scope>
</reference>
<keyword id="KW-0963">Cytoplasm</keyword>
<keyword id="KW-0254">Endocytosis</keyword>
<keyword id="KW-1017">Isopeptide bond</keyword>
<keyword id="KW-1185">Reference proteome</keyword>
<keyword id="KW-0832">Ubl conjugation</keyword>